<evidence type="ECO:0000250" key="1">
    <source>
        <dbReference type="UniProtKB" id="Q3TYS2"/>
    </source>
</evidence>
<evidence type="ECO:0000250" key="2">
    <source>
        <dbReference type="UniProtKB" id="Q9BQA9"/>
    </source>
</evidence>
<evidence type="ECO:0000255" key="3"/>
<evidence type="ECO:0000305" key="4"/>
<organism>
    <name type="scientific">Xenopus tropicalis</name>
    <name type="common">Western clawed frog</name>
    <name type="synonym">Silurana tropicalis</name>
    <dbReference type="NCBI Taxonomy" id="8364"/>
    <lineage>
        <taxon>Eukaryota</taxon>
        <taxon>Metazoa</taxon>
        <taxon>Chordata</taxon>
        <taxon>Craniata</taxon>
        <taxon>Vertebrata</taxon>
        <taxon>Euteleostomi</taxon>
        <taxon>Amphibia</taxon>
        <taxon>Batrachia</taxon>
        <taxon>Anura</taxon>
        <taxon>Pipoidea</taxon>
        <taxon>Pipidae</taxon>
        <taxon>Xenopodinae</taxon>
        <taxon>Xenopus</taxon>
        <taxon>Silurana</taxon>
    </lineage>
</organism>
<name>CYBC1_XENTR</name>
<protein>
    <recommendedName>
        <fullName evidence="4">Cytochrome b-245 chaperone 1 homolog</fullName>
    </recommendedName>
    <alternativeName>
        <fullName evidence="1">Essential for reactive oxygen species protein</fullName>
        <shortName evidence="1">Eros</shortName>
    </alternativeName>
</protein>
<accession>Q0D2D7</accession>
<feature type="chain" id="PRO_0000281423" description="Cytochrome b-245 chaperone 1 homolog">
    <location>
        <begin position="1"/>
        <end position="188"/>
    </location>
</feature>
<feature type="transmembrane region" description="Helical" evidence="3">
    <location>
        <begin position="20"/>
        <end position="42"/>
    </location>
</feature>
<comment type="function">
    <text evidence="2">Functions as a chaperone necessary for a stable expression of the CYBA and CYBB subunits of the cytochrome b-245 heterodimer.</text>
</comment>
<comment type="subcellular location">
    <subcellularLocation>
        <location evidence="2">Endoplasmic reticulum membrane</location>
        <topology evidence="4">Single-pass membrane protein</topology>
    </subcellularLocation>
</comment>
<comment type="similarity">
    <text>Belongs to the CYBC1 family.</text>
</comment>
<reference key="1">
    <citation type="submission" date="2006-08" db="EMBL/GenBank/DDBJ databases">
        <authorList>
            <consortium name="NIH - Xenopus Gene Collection (XGC) project"/>
        </authorList>
    </citation>
    <scope>NUCLEOTIDE SEQUENCE [LARGE SCALE MRNA]</scope>
    <source>
        <tissue>Testis</tissue>
    </source>
</reference>
<dbReference type="EMBL" id="BC121946">
    <property type="protein sequence ID" value="AAI21947.1"/>
    <property type="molecule type" value="mRNA"/>
</dbReference>
<dbReference type="RefSeq" id="NP_001072837.1">
    <property type="nucleotide sequence ID" value="NM_001079369.1"/>
</dbReference>
<dbReference type="SMR" id="Q0D2D7"/>
<dbReference type="FunCoup" id="Q0D2D7">
    <property type="interactions" value="992"/>
</dbReference>
<dbReference type="PaxDb" id="8364-ENSXETP00000026727"/>
<dbReference type="DNASU" id="780298"/>
<dbReference type="GeneID" id="780298"/>
<dbReference type="KEGG" id="xtr:780298"/>
<dbReference type="AGR" id="Xenbase:XB-GENE-977743"/>
<dbReference type="CTD" id="79415"/>
<dbReference type="Xenbase" id="XB-GENE-977743">
    <property type="gene designation" value="cybc1"/>
</dbReference>
<dbReference type="eggNOG" id="ENOG502S06T">
    <property type="taxonomic scope" value="Eukaryota"/>
</dbReference>
<dbReference type="HOGENOM" id="CLU_100734_0_0_1"/>
<dbReference type="InParanoid" id="Q0D2D7"/>
<dbReference type="OMA" id="WKLFYIT"/>
<dbReference type="OrthoDB" id="10022724at2759"/>
<dbReference type="PhylomeDB" id="Q0D2D7"/>
<dbReference type="TreeFam" id="TF332389"/>
<dbReference type="Proteomes" id="UP000008143">
    <property type="component" value="Chromosome 10"/>
</dbReference>
<dbReference type="Bgee" id="ENSXETG00000012235">
    <property type="expression patterns" value="Expressed in 2-cell stage embryo and 13 other cell types or tissues"/>
</dbReference>
<dbReference type="GO" id="GO:0005783">
    <property type="term" value="C:endoplasmic reticulum"/>
    <property type="evidence" value="ECO:0000250"/>
    <property type="project" value="UniProtKB"/>
</dbReference>
<dbReference type="GO" id="GO:0005789">
    <property type="term" value="C:endoplasmic reticulum membrane"/>
    <property type="evidence" value="ECO:0007669"/>
    <property type="project" value="UniProtKB-SubCell"/>
</dbReference>
<dbReference type="GO" id="GO:0045087">
    <property type="term" value="P:innate immune response"/>
    <property type="evidence" value="ECO:0000250"/>
    <property type="project" value="UniProtKB"/>
</dbReference>
<dbReference type="GO" id="GO:0045728">
    <property type="term" value="P:respiratory burst after phagocytosis"/>
    <property type="evidence" value="ECO:0000250"/>
    <property type="project" value="UniProtKB"/>
</dbReference>
<dbReference type="InterPro" id="IPR027846">
    <property type="entry name" value="Cybc1"/>
</dbReference>
<dbReference type="PANTHER" id="PTHR31837">
    <property type="entry name" value="CYTOCHROME B-245 CHAPERONE 1"/>
    <property type="match status" value="1"/>
</dbReference>
<dbReference type="PANTHER" id="PTHR31837:SF3">
    <property type="entry name" value="CYTOCHROME B-245 CHAPERONE 1"/>
    <property type="match status" value="1"/>
</dbReference>
<dbReference type="Pfam" id="PF15169">
    <property type="entry name" value="Cybc1_Eros"/>
    <property type="match status" value="1"/>
</dbReference>
<proteinExistence type="evidence at transcript level"/>
<sequence length="188" mass="21079">MYMQVESRTGTLLHLKRNPSIRSWSLLVGISSVGLAAAYYSTDTWLWKLFYVAGCAFVALQNLEDWEEAIFDKKSGKAILITYSLYKKLLTLCKGGQEQVVVLLKEIRDVNVEEERVRYFGSGYVIVLRFVTGISHPLTQSAVLGARSDVEAVAKELTKFLEFDLVGSRPQAVEESNDSESDEALDTQ</sequence>
<gene>
    <name type="primary">cybc1</name>
    <name evidence="1" type="synonym">eros</name>
</gene>
<keyword id="KW-0143">Chaperone</keyword>
<keyword id="KW-0256">Endoplasmic reticulum</keyword>
<keyword id="KW-0391">Immunity</keyword>
<keyword id="KW-0399">Innate immunity</keyword>
<keyword id="KW-0472">Membrane</keyword>
<keyword id="KW-1185">Reference proteome</keyword>
<keyword id="KW-0812">Transmembrane</keyword>
<keyword id="KW-1133">Transmembrane helix</keyword>